<reference key="1">
    <citation type="journal article" date="2008" name="Appl. Environ. Microbiol.">
        <title>Genome of the epsilonproteobacterial chemolithoautotroph Sulfurimonas denitrificans.</title>
        <authorList>
            <person name="Sievert S.M."/>
            <person name="Scott K.M."/>
            <person name="Klotz M.G."/>
            <person name="Chain P.S.G."/>
            <person name="Hauser L.J."/>
            <person name="Hemp J."/>
            <person name="Huegler M."/>
            <person name="Land M."/>
            <person name="Lapidus A."/>
            <person name="Larimer F.W."/>
            <person name="Lucas S."/>
            <person name="Malfatti S.A."/>
            <person name="Meyer F."/>
            <person name="Paulsen I.T."/>
            <person name="Ren Q."/>
            <person name="Simon J."/>
            <person name="Bailey K."/>
            <person name="Diaz E."/>
            <person name="Fitzpatrick K.A."/>
            <person name="Glover B."/>
            <person name="Gwatney N."/>
            <person name="Korajkic A."/>
            <person name="Long A."/>
            <person name="Mobberley J.M."/>
            <person name="Pantry S.N."/>
            <person name="Pazder G."/>
            <person name="Peterson S."/>
            <person name="Quintanilla J.D."/>
            <person name="Sprinkle R."/>
            <person name="Stephens J."/>
            <person name="Thomas P."/>
            <person name="Vaughn R."/>
            <person name="Weber M.J."/>
            <person name="Wooten L.L."/>
        </authorList>
    </citation>
    <scope>NUCLEOTIDE SEQUENCE [LARGE SCALE GENOMIC DNA]</scope>
    <source>
        <strain>ATCC 33889 / DSM 1251</strain>
    </source>
</reference>
<evidence type="ECO:0000255" key="1">
    <source>
        <dbReference type="HAMAP-Rule" id="MF_00182"/>
    </source>
</evidence>
<protein>
    <recommendedName>
        <fullName evidence="1">Methionyl-tRNA formyltransferase</fullName>
        <ecNumber evidence="1">2.1.2.9</ecNumber>
    </recommendedName>
</protein>
<accession>Q30QP2</accession>
<proteinExistence type="inferred from homology"/>
<name>FMT_SULDN</name>
<dbReference type="EC" id="2.1.2.9" evidence="1"/>
<dbReference type="EMBL" id="CP000153">
    <property type="protein sequence ID" value="ABB44689.1"/>
    <property type="molecule type" value="Genomic_DNA"/>
</dbReference>
<dbReference type="RefSeq" id="WP_011373041.1">
    <property type="nucleotide sequence ID" value="NC_007575.1"/>
</dbReference>
<dbReference type="SMR" id="Q30QP2"/>
<dbReference type="STRING" id="326298.Suden_1412"/>
<dbReference type="KEGG" id="tdn:Suden_1412"/>
<dbReference type="eggNOG" id="COG0223">
    <property type="taxonomic scope" value="Bacteria"/>
</dbReference>
<dbReference type="HOGENOM" id="CLU_033347_1_1_7"/>
<dbReference type="OrthoDB" id="9802815at2"/>
<dbReference type="Proteomes" id="UP000002714">
    <property type="component" value="Chromosome"/>
</dbReference>
<dbReference type="GO" id="GO:0005829">
    <property type="term" value="C:cytosol"/>
    <property type="evidence" value="ECO:0007669"/>
    <property type="project" value="TreeGrafter"/>
</dbReference>
<dbReference type="GO" id="GO:0004479">
    <property type="term" value="F:methionyl-tRNA formyltransferase activity"/>
    <property type="evidence" value="ECO:0007669"/>
    <property type="project" value="UniProtKB-UniRule"/>
</dbReference>
<dbReference type="CDD" id="cd08646">
    <property type="entry name" value="FMT_core_Met-tRNA-FMT_N"/>
    <property type="match status" value="1"/>
</dbReference>
<dbReference type="CDD" id="cd08704">
    <property type="entry name" value="Met_tRNA_FMT_C"/>
    <property type="match status" value="1"/>
</dbReference>
<dbReference type="Gene3D" id="3.40.50.12230">
    <property type="match status" value="1"/>
</dbReference>
<dbReference type="HAMAP" id="MF_00182">
    <property type="entry name" value="Formyl_trans"/>
    <property type="match status" value="1"/>
</dbReference>
<dbReference type="InterPro" id="IPR005794">
    <property type="entry name" value="Fmt"/>
</dbReference>
<dbReference type="InterPro" id="IPR005793">
    <property type="entry name" value="Formyl_trans_C"/>
</dbReference>
<dbReference type="InterPro" id="IPR002376">
    <property type="entry name" value="Formyl_transf_N"/>
</dbReference>
<dbReference type="InterPro" id="IPR036477">
    <property type="entry name" value="Formyl_transf_N_sf"/>
</dbReference>
<dbReference type="InterPro" id="IPR011034">
    <property type="entry name" value="Formyl_transferase-like_C_sf"/>
</dbReference>
<dbReference type="InterPro" id="IPR044135">
    <property type="entry name" value="Met-tRNA-FMT_C"/>
</dbReference>
<dbReference type="InterPro" id="IPR041711">
    <property type="entry name" value="Met-tRNA-FMT_N"/>
</dbReference>
<dbReference type="NCBIfam" id="TIGR00460">
    <property type="entry name" value="fmt"/>
    <property type="match status" value="1"/>
</dbReference>
<dbReference type="PANTHER" id="PTHR11138">
    <property type="entry name" value="METHIONYL-TRNA FORMYLTRANSFERASE"/>
    <property type="match status" value="1"/>
</dbReference>
<dbReference type="PANTHER" id="PTHR11138:SF5">
    <property type="entry name" value="METHIONYL-TRNA FORMYLTRANSFERASE, MITOCHONDRIAL"/>
    <property type="match status" value="1"/>
</dbReference>
<dbReference type="Pfam" id="PF02911">
    <property type="entry name" value="Formyl_trans_C"/>
    <property type="match status" value="1"/>
</dbReference>
<dbReference type="Pfam" id="PF00551">
    <property type="entry name" value="Formyl_trans_N"/>
    <property type="match status" value="1"/>
</dbReference>
<dbReference type="SUPFAM" id="SSF50486">
    <property type="entry name" value="FMT C-terminal domain-like"/>
    <property type="match status" value="1"/>
</dbReference>
<dbReference type="SUPFAM" id="SSF53328">
    <property type="entry name" value="Formyltransferase"/>
    <property type="match status" value="1"/>
</dbReference>
<sequence length="302" mass="33519">MKIIFMGTPDYAAHILEKLLNTKNIEVVALYTQPDKPVGRKKILTPPAAKNIALKYGIAISQPSRLRDKETVAEVTSIECDYIVVAAYGQILPLEILKHAPCINLHASILPHYRGASPIQQTLLHGDVKTGVTAMLMNEGLDTGDILKIKEIEVDADEMSESLFSRLTEVASDLTIDVLENFVQYTPKIQDDSLSSHCKKITKQDGEVEFDNATAIFNKYRAFTPWPGIYLTSGLKLKKIELFEKESQNESGRILDIQKDSIIVGCKKGSIKVITLQPESKNEMSALSYINGKRLNIADTLS</sequence>
<gene>
    <name evidence="1" type="primary">fmt</name>
    <name type="ordered locus">Suden_1412</name>
</gene>
<feature type="chain" id="PRO_1000020199" description="Methionyl-tRNA formyltransferase">
    <location>
        <begin position="1"/>
        <end position="302"/>
    </location>
</feature>
<feature type="binding site" evidence="1">
    <location>
        <begin position="108"/>
        <end position="111"/>
    </location>
    <ligand>
        <name>(6S)-5,6,7,8-tetrahydrofolate</name>
        <dbReference type="ChEBI" id="CHEBI:57453"/>
    </ligand>
</feature>
<comment type="function">
    <text evidence="1">Attaches a formyl group to the free amino group of methionyl-tRNA(fMet). The formyl group appears to play a dual role in the initiator identity of N-formylmethionyl-tRNA by promoting its recognition by IF2 and preventing the misappropriation of this tRNA by the elongation apparatus.</text>
</comment>
<comment type="catalytic activity">
    <reaction evidence="1">
        <text>L-methionyl-tRNA(fMet) + (6R)-10-formyltetrahydrofolate = N-formyl-L-methionyl-tRNA(fMet) + (6S)-5,6,7,8-tetrahydrofolate + H(+)</text>
        <dbReference type="Rhea" id="RHEA:24380"/>
        <dbReference type="Rhea" id="RHEA-COMP:9952"/>
        <dbReference type="Rhea" id="RHEA-COMP:9953"/>
        <dbReference type="ChEBI" id="CHEBI:15378"/>
        <dbReference type="ChEBI" id="CHEBI:57453"/>
        <dbReference type="ChEBI" id="CHEBI:78530"/>
        <dbReference type="ChEBI" id="CHEBI:78844"/>
        <dbReference type="ChEBI" id="CHEBI:195366"/>
        <dbReference type="EC" id="2.1.2.9"/>
    </reaction>
</comment>
<comment type="similarity">
    <text evidence="1">Belongs to the Fmt family.</text>
</comment>
<organism>
    <name type="scientific">Sulfurimonas denitrificans (strain ATCC 33889 / DSM 1251)</name>
    <name type="common">Thiomicrospira denitrificans (strain ATCC 33889 / DSM 1251)</name>
    <dbReference type="NCBI Taxonomy" id="326298"/>
    <lineage>
        <taxon>Bacteria</taxon>
        <taxon>Pseudomonadati</taxon>
        <taxon>Campylobacterota</taxon>
        <taxon>Epsilonproteobacteria</taxon>
        <taxon>Campylobacterales</taxon>
        <taxon>Sulfurimonadaceae</taxon>
        <taxon>Sulfurimonas</taxon>
    </lineage>
</organism>
<keyword id="KW-0648">Protein biosynthesis</keyword>
<keyword id="KW-1185">Reference proteome</keyword>
<keyword id="KW-0808">Transferase</keyword>